<proteinExistence type="inferred from homology"/>
<name>RS9_METCA</name>
<keyword id="KW-1185">Reference proteome</keyword>
<keyword id="KW-0687">Ribonucleoprotein</keyword>
<keyword id="KW-0689">Ribosomal protein</keyword>
<dbReference type="EMBL" id="AE017282">
    <property type="protein sequence ID" value="AAU92851.1"/>
    <property type="molecule type" value="Genomic_DNA"/>
</dbReference>
<dbReference type="RefSeq" id="WP_010960216.1">
    <property type="nucleotide sequence ID" value="NC_002977.6"/>
</dbReference>
<dbReference type="SMR" id="Q60AF7"/>
<dbReference type="STRING" id="243233.MCA0905"/>
<dbReference type="GeneID" id="88223208"/>
<dbReference type="KEGG" id="mca:MCA0905"/>
<dbReference type="eggNOG" id="COG0103">
    <property type="taxonomic scope" value="Bacteria"/>
</dbReference>
<dbReference type="HOGENOM" id="CLU_046483_2_1_6"/>
<dbReference type="Proteomes" id="UP000006821">
    <property type="component" value="Chromosome"/>
</dbReference>
<dbReference type="GO" id="GO:0022627">
    <property type="term" value="C:cytosolic small ribosomal subunit"/>
    <property type="evidence" value="ECO:0007669"/>
    <property type="project" value="TreeGrafter"/>
</dbReference>
<dbReference type="GO" id="GO:0003723">
    <property type="term" value="F:RNA binding"/>
    <property type="evidence" value="ECO:0007669"/>
    <property type="project" value="TreeGrafter"/>
</dbReference>
<dbReference type="GO" id="GO:0003735">
    <property type="term" value="F:structural constituent of ribosome"/>
    <property type="evidence" value="ECO:0007669"/>
    <property type="project" value="InterPro"/>
</dbReference>
<dbReference type="GO" id="GO:0006412">
    <property type="term" value="P:translation"/>
    <property type="evidence" value="ECO:0007669"/>
    <property type="project" value="UniProtKB-UniRule"/>
</dbReference>
<dbReference type="FunFam" id="3.30.230.10:FF:000001">
    <property type="entry name" value="30S ribosomal protein S9"/>
    <property type="match status" value="1"/>
</dbReference>
<dbReference type="Gene3D" id="3.30.230.10">
    <property type="match status" value="1"/>
</dbReference>
<dbReference type="HAMAP" id="MF_00532_B">
    <property type="entry name" value="Ribosomal_uS9_B"/>
    <property type="match status" value="1"/>
</dbReference>
<dbReference type="InterPro" id="IPR020568">
    <property type="entry name" value="Ribosomal_Su5_D2-typ_SF"/>
</dbReference>
<dbReference type="InterPro" id="IPR000754">
    <property type="entry name" value="Ribosomal_uS9"/>
</dbReference>
<dbReference type="InterPro" id="IPR023035">
    <property type="entry name" value="Ribosomal_uS9_bac/plastid"/>
</dbReference>
<dbReference type="InterPro" id="IPR020574">
    <property type="entry name" value="Ribosomal_uS9_CS"/>
</dbReference>
<dbReference type="InterPro" id="IPR014721">
    <property type="entry name" value="Ribsml_uS5_D2-typ_fold_subgr"/>
</dbReference>
<dbReference type="NCBIfam" id="NF001099">
    <property type="entry name" value="PRK00132.1"/>
    <property type="match status" value="1"/>
</dbReference>
<dbReference type="PANTHER" id="PTHR21569">
    <property type="entry name" value="RIBOSOMAL PROTEIN S9"/>
    <property type="match status" value="1"/>
</dbReference>
<dbReference type="PANTHER" id="PTHR21569:SF1">
    <property type="entry name" value="SMALL RIBOSOMAL SUBUNIT PROTEIN US9M"/>
    <property type="match status" value="1"/>
</dbReference>
<dbReference type="Pfam" id="PF00380">
    <property type="entry name" value="Ribosomal_S9"/>
    <property type="match status" value="1"/>
</dbReference>
<dbReference type="SUPFAM" id="SSF54211">
    <property type="entry name" value="Ribosomal protein S5 domain 2-like"/>
    <property type="match status" value="1"/>
</dbReference>
<dbReference type="PROSITE" id="PS00360">
    <property type="entry name" value="RIBOSOMAL_S9"/>
    <property type="match status" value="1"/>
</dbReference>
<sequence>MAQTQYYGTGRRKSAIARVYTRTGTGQIRINDKSLEEYFGRKTDRMIVMQALEAVEMTDKLDVNVKVIGGGPSGQAGAIRHGLARALIELDEAMRPVLRKAGYVTRDAREVERKKVGLHKARRRPQYSKR</sequence>
<evidence type="ECO:0000255" key="1">
    <source>
        <dbReference type="HAMAP-Rule" id="MF_00532"/>
    </source>
</evidence>
<evidence type="ECO:0000305" key="2"/>
<feature type="chain" id="PRO_1000051251" description="Small ribosomal subunit protein uS9">
    <location>
        <begin position="1"/>
        <end position="130"/>
    </location>
</feature>
<gene>
    <name evidence="1" type="primary">rpsI</name>
    <name type="ordered locus">MCA0905</name>
</gene>
<organism>
    <name type="scientific">Methylococcus capsulatus (strain ATCC 33009 / NCIMB 11132 / Bath)</name>
    <dbReference type="NCBI Taxonomy" id="243233"/>
    <lineage>
        <taxon>Bacteria</taxon>
        <taxon>Pseudomonadati</taxon>
        <taxon>Pseudomonadota</taxon>
        <taxon>Gammaproteobacteria</taxon>
        <taxon>Methylococcales</taxon>
        <taxon>Methylococcaceae</taxon>
        <taxon>Methylococcus</taxon>
    </lineage>
</organism>
<reference key="1">
    <citation type="journal article" date="2004" name="PLoS Biol.">
        <title>Genomic insights into methanotrophy: the complete genome sequence of Methylococcus capsulatus (Bath).</title>
        <authorList>
            <person name="Ward N.L."/>
            <person name="Larsen O."/>
            <person name="Sakwa J."/>
            <person name="Bruseth L."/>
            <person name="Khouri H.M."/>
            <person name="Durkin A.S."/>
            <person name="Dimitrov G."/>
            <person name="Jiang L."/>
            <person name="Scanlan D."/>
            <person name="Kang K.H."/>
            <person name="Lewis M.R."/>
            <person name="Nelson K.E."/>
            <person name="Methe B.A."/>
            <person name="Wu M."/>
            <person name="Heidelberg J.F."/>
            <person name="Paulsen I.T."/>
            <person name="Fouts D.E."/>
            <person name="Ravel J."/>
            <person name="Tettelin H."/>
            <person name="Ren Q."/>
            <person name="Read T.D."/>
            <person name="DeBoy R.T."/>
            <person name="Seshadri R."/>
            <person name="Salzberg S.L."/>
            <person name="Jensen H.B."/>
            <person name="Birkeland N.K."/>
            <person name="Nelson W.C."/>
            <person name="Dodson R.J."/>
            <person name="Grindhaug S.H."/>
            <person name="Holt I.E."/>
            <person name="Eidhammer I."/>
            <person name="Jonasen I."/>
            <person name="Vanaken S."/>
            <person name="Utterback T.R."/>
            <person name="Feldblyum T.V."/>
            <person name="Fraser C.M."/>
            <person name="Lillehaug J.R."/>
            <person name="Eisen J.A."/>
        </authorList>
    </citation>
    <scope>NUCLEOTIDE SEQUENCE [LARGE SCALE GENOMIC DNA]</scope>
    <source>
        <strain>ATCC 33009 / NCIMB 11132 / Bath</strain>
    </source>
</reference>
<accession>Q60AF7</accession>
<protein>
    <recommendedName>
        <fullName evidence="1">Small ribosomal subunit protein uS9</fullName>
    </recommendedName>
    <alternativeName>
        <fullName evidence="2">30S ribosomal protein S9</fullName>
    </alternativeName>
</protein>
<comment type="similarity">
    <text evidence="1">Belongs to the universal ribosomal protein uS9 family.</text>
</comment>